<reference key="1">
    <citation type="journal article" date="2000" name="DNA Res.">
        <title>Structural analysis of Arabidopsis thaliana chromosome 3. II. Sequence features of the 4,251,695 bp regions covered by 90 P1, TAC and BAC clones.</title>
        <authorList>
            <person name="Kaneko T."/>
            <person name="Katoh T."/>
            <person name="Sato S."/>
            <person name="Nakamura Y."/>
            <person name="Asamizu E."/>
            <person name="Tabata S."/>
        </authorList>
    </citation>
    <scope>NUCLEOTIDE SEQUENCE [LARGE SCALE GENOMIC DNA]</scope>
    <source>
        <strain>cv. Columbia</strain>
    </source>
</reference>
<reference key="2">
    <citation type="journal article" date="2017" name="Plant J.">
        <title>Araport11: a complete reannotation of the Arabidopsis thaliana reference genome.</title>
        <authorList>
            <person name="Cheng C.Y."/>
            <person name="Krishnakumar V."/>
            <person name="Chan A.P."/>
            <person name="Thibaud-Nissen F."/>
            <person name="Schobel S."/>
            <person name="Town C.D."/>
        </authorList>
    </citation>
    <scope>GENOME REANNOTATION</scope>
    <source>
        <strain>cv. Columbia</strain>
    </source>
</reference>
<reference key="3">
    <citation type="journal article" date="2009" name="Plant J.">
        <title>Molecular and reverse genetic characterization of NUCLEOSOME ASSEMBLY PROTEIN1 (NAP1) genes unravels their function in transcription and nucleotide excision repair in Arabidopsis thaliana.</title>
        <authorList>
            <person name="Liu Z."/>
            <person name="Zhu Y."/>
            <person name="Gao J."/>
            <person name="Yu F."/>
            <person name="Dong A."/>
            <person name="Shen W.H."/>
        </authorList>
    </citation>
    <scope>GENE FAMILY</scope>
    <scope>SUBUNIT</scope>
    <scope>SUBCELLULAR LOCATION</scope>
    <scope>TISSUE SPECIFICITY</scope>
    <scope>INTERACTION WITH HISTONE H2A</scope>
</reference>
<protein>
    <recommendedName>
        <fullName>Nucleosome assembly protein 1;4</fullName>
        <shortName>AtNAP1;4</shortName>
    </recommendedName>
    <alternativeName>
        <fullName>Nucleosome/chromatin assembly factor group A4</fullName>
    </alternativeName>
</protein>
<feature type="chain" id="PRO_0000423682" description="Nucleosome assembly protein 1;4">
    <location>
        <begin position="1"/>
        <end position="317"/>
    </location>
</feature>
<feature type="region of interest" description="Disordered" evidence="3">
    <location>
        <begin position="297"/>
        <end position="317"/>
    </location>
</feature>
<feature type="short sequence motif" description="Nuclear export signal" evidence="2">
    <location>
        <begin position="52"/>
        <end position="67"/>
    </location>
</feature>
<feature type="short sequence motif" description="Nuclear localization signal" evidence="2">
    <location>
        <begin position="214"/>
        <end position="219"/>
    </location>
</feature>
<feature type="compositionally biased region" description="Acidic residues" evidence="3">
    <location>
        <begin position="298"/>
        <end position="317"/>
    </location>
</feature>
<name>NAP1D_ARATH</name>
<proteinExistence type="evidence at protein level"/>
<sequence>MSNEENIKSDNKSGDSSDLPTIPALDIGAEECDLLAELKNLTLKRPFDVKKLSPKVTKRVLFLKDIQVTHDELEEKFLAEKSALEATYDNLYKPLFAKRYEIVNGVVEAEAEKEGVPNFWLIAMKTNEMLANEITERDEAALKYLKDIRSCRVEDTSRNFKLEFLFDSNLYFKNSVLSKTYHVNDEDGPVLEKVIGTDIEWFPGKCLTHKVVVKKKTKKGPKKVNNIPMTKTENCESFFNFFKPPEIPEIDEVDDYDDFDTIMTEELQNLMDQDYDIAVTIRDKLIPHAVSWFTGEALVDEDDSDDNDDDDNDEKSD</sequence>
<keyword id="KW-0143">Chaperone</keyword>
<keyword id="KW-0963">Cytoplasm</keyword>
<keyword id="KW-0539">Nucleus</keyword>
<keyword id="KW-1185">Reference proteome</keyword>
<organism>
    <name type="scientific">Arabidopsis thaliana</name>
    <name type="common">Mouse-ear cress</name>
    <dbReference type="NCBI Taxonomy" id="3702"/>
    <lineage>
        <taxon>Eukaryota</taxon>
        <taxon>Viridiplantae</taxon>
        <taxon>Streptophyta</taxon>
        <taxon>Embryophyta</taxon>
        <taxon>Tracheophyta</taxon>
        <taxon>Spermatophyta</taxon>
        <taxon>Magnoliopsida</taxon>
        <taxon>eudicotyledons</taxon>
        <taxon>Gunneridae</taxon>
        <taxon>Pentapetalae</taxon>
        <taxon>rosids</taxon>
        <taxon>malvids</taxon>
        <taxon>Brassicales</taxon>
        <taxon>Brassicaceae</taxon>
        <taxon>Camelineae</taxon>
        <taxon>Arabidopsis</taxon>
    </lineage>
</organism>
<comment type="function">
    <text evidence="1">May modulate chromatin structure by regulation of nucleosome assembly/disassembly.</text>
</comment>
<comment type="subunit">
    <text evidence="4">Can form homomeric and heteromeric protein complexes with NAP1;1, NAP1;2 and NAP1;3. Binds histone H2A.</text>
</comment>
<comment type="interaction">
    <interactant intactId="EBI-6913300">
        <id>F4JEI8</id>
    </interactant>
    <interactant intactId="EBI-4424361">
        <id>Q9SZI2</id>
        <label>NAP1;1</label>
    </interactant>
    <organismsDiffer>false</organismsDiffer>
    <experiments>2</experiments>
</comment>
<comment type="interaction">
    <interactant intactId="EBI-6913300">
        <id>F4JEI8</id>
    </interactant>
    <interactant intactId="EBI-1997989">
        <id>Q9ZUP3</id>
        <label>NAP1;2</label>
    </interactant>
    <organismsDiffer>false</organismsDiffer>
    <experiments>3</experiments>
</comment>
<comment type="interaction">
    <interactant intactId="EBI-6913300">
        <id>F4JEI8</id>
    </interactant>
    <interactant intactId="EBI-4430887">
        <id>Q94K07</id>
        <label>NAP1;3</label>
    </interactant>
    <organismsDiffer>false</organismsDiffer>
    <experiments>3</experiments>
</comment>
<comment type="subcellular location">
    <subcellularLocation>
        <location evidence="4">Nucleus</location>
    </subcellularLocation>
    <subcellularLocation>
        <location evidence="4">Cytoplasm</location>
    </subcellularLocation>
    <text>Shuttles between cytoplasm and nucleus.</text>
</comment>
<comment type="tissue specificity">
    <text evidence="4">Expressed in the root segment covering the apical end of the differentiation zone, the elongation zone of the root and the mature pollen within the anthers of open flowers.</text>
</comment>
<comment type="domain">
    <text>The acidic domain is probably involved in the interaction with histones.</text>
</comment>
<comment type="similarity">
    <text evidence="5">Belongs to the nucleosome assembly protein (NAP) family.</text>
</comment>
<comment type="sequence caution" evidence="5">
    <conflict type="erroneous gene model prediction">
        <sequence resource="EMBL-CDS" id="BAB01928"/>
    </conflict>
</comment>
<evidence type="ECO:0000250" key="1"/>
<evidence type="ECO:0000255" key="2"/>
<evidence type="ECO:0000256" key="3">
    <source>
        <dbReference type="SAM" id="MobiDB-lite"/>
    </source>
</evidence>
<evidence type="ECO:0000269" key="4">
    <source>
    </source>
</evidence>
<evidence type="ECO:0000305" key="5"/>
<gene>
    <name type="primary">NAP1;4</name>
    <name type="synonym">NFA4</name>
    <name type="ordered locus">At3g13782</name>
    <name type="ORF">MMM17.22</name>
</gene>
<accession>F4JEI8</accession>
<accession>Q9LIC0</accession>
<dbReference type="EMBL" id="AP001307">
    <property type="protein sequence ID" value="BAB01928.1"/>
    <property type="status" value="ALT_SEQ"/>
    <property type="molecule type" value="Genomic_DNA"/>
</dbReference>
<dbReference type="EMBL" id="CP002686">
    <property type="protein sequence ID" value="AEE75412.1"/>
    <property type="molecule type" value="Genomic_DNA"/>
</dbReference>
<dbReference type="EMBL" id="CP002686">
    <property type="protein sequence ID" value="ANM63955.1"/>
    <property type="molecule type" value="Genomic_DNA"/>
</dbReference>
<dbReference type="RefSeq" id="NP_001319544.1">
    <property type="nucleotide sequence ID" value="NM_001338075.1"/>
</dbReference>
<dbReference type="RefSeq" id="NP_187993.2">
    <property type="nucleotide sequence ID" value="NM_112230.3"/>
</dbReference>
<dbReference type="SMR" id="F4JEI8"/>
<dbReference type="FunCoup" id="F4JEI8">
    <property type="interactions" value="2920"/>
</dbReference>
<dbReference type="IntAct" id="F4JEI8">
    <property type="interactions" value="3"/>
</dbReference>
<dbReference type="STRING" id="3702.F4JEI8"/>
<dbReference type="PaxDb" id="3702-AT3G13782.1"/>
<dbReference type="ProteomicsDB" id="238430"/>
<dbReference type="EnsemblPlants" id="AT3G13782.1">
    <property type="protein sequence ID" value="AT3G13782.1"/>
    <property type="gene ID" value="AT3G13782"/>
</dbReference>
<dbReference type="EnsemblPlants" id="AT3G13782.2">
    <property type="protein sequence ID" value="AT3G13782.2"/>
    <property type="gene ID" value="AT3G13782"/>
</dbReference>
<dbReference type="GeneID" id="820589"/>
<dbReference type="Gramene" id="AT3G13782.1">
    <property type="protein sequence ID" value="AT3G13782.1"/>
    <property type="gene ID" value="AT3G13782"/>
</dbReference>
<dbReference type="Gramene" id="AT3G13782.2">
    <property type="protein sequence ID" value="AT3G13782.2"/>
    <property type="gene ID" value="AT3G13782"/>
</dbReference>
<dbReference type="KEGG" id="ath:AT3G13782"/>
<dbReference type="Araport" id="AT3G13782"/>
<dbReference type="TAIR" id="AT3G13782">
    <property type="gene designation" value="NAP1"/>
</dbReference>
<dbReference type="eggNOG" id="KOG1507">
    <property type="taxonomic scope" value="Eukaryota"/>
</dbReference>
<dbReference type="HOGENOM" id="CLU_038841_4_0_1"/>
<dbReference type="InParanoid" id="F4JEI8"/>
<dbReference type="OMA" id="YHVNDED"/>
<dbReference type="OrthoDB" id="27325at2759"/>
<dbReference type="PRO" id="PR:F4JEI8"/>
<dbReference type="Proteomes" id="UP000006548">
    <property type="component" value="Chromosome 3"/>
</dbReference>
<dbReference type="ExpressionAtlas" id="F4JEI8">
    <property type="expression patterns" value="baseline and differential"/>
</dbReference>
<dbReference type="GO" id="GO:0005737">
    <property type="term" value="C:cytoplasm"/>
    <property type="evidence" value="ECO:0000314"/>
    <property type="project" value="UniProtKB"/>
</dbReference>
<dbReference type="GO" id="GO:0005634">
    <property type="term" value="C:nucleus"/>
    <property type="evidence" value="ECO:0000314"/>
    <property type="project" value="UniProtKB"/>
</dbReference>
<dbReference type="GO" id="GO:0003682">
    <property type="term" value="F:chromatin binding"/>
    <property type="evidence" value="ECO:0000314"/>
    <property type="project" value="TAIR"/>
</dbReference>
<dbReference type="GO" id="GO:0042393">
    <property type="term" value="F:histone binding"/>
    <property type="evidence" value="ECO:0000314"/>
    <property type="project" value="UniProtKB"/>
</dbReference>
<dbReference type="GO" id="GO:0000724">
    <property type="term" value="P:double-strand break repair via homologous recombination"/>
    <property type="evidence" value="ECO:0000316"/>
    <property type="project" value="TAIR"/>
</dbReference>
<dbReference type="GO" id="GO:0006334">
    <property type="term" value="P:nucleosome assembly"/>
    <property type="evidence" value="ECO:0007669"/>
    <property type="project" value="InterPro"/>
</dbReference>
<dbReference type="FunFam" id="1.20.5.1500:FF:000001">
    <property type="entry name" value="Nucleosome assembly protein 1-like 1"/>
    <property type="match status" value="1"/>
</dbReference>
<dbReference type="FunFam" id="3.30.1120.90:FF:000005">
    <property type="entry name" value="Nucleosome assembly protein11"/>
    <property type="match status" value="1"/>
</dbReference>
<dbReference type="Gene3D" id="1.20.5.1500">
    <property type="match status" value="1"/>
</dbReference>
<dbReference type="Gene3D" id="3.30.1120.90">
    <property type="entry name" value="Nucleosome assembly protein"/>
    <property type="match status" value="1"/>
</dbReference>
<dbReference type="InterPro" id="IPR037231">
    <property type="entry name" value="NAP-like_sf"/>
</dbReference>
<dbReference type="InterPro" id="IPR002164">
    <property type="entry name" value="NAP_family"/>
</dbReference>
<dbReference type="PANTHER" id="PTHR11875">
    <property type="entry name" value="TESTIS-SPECIFIC Y-ENCODED PROTEIN"/>
    <property type="match status" value="1"/>
</dbReference>
<dbReference type="Pfam" id="PF00956">
    <property type="entry name" value="NAP"/>
    <property type="match status" value="1"/>
</dbReference>
<dbReference type="SUPFAM" id="SSF143113">
    <property type="entry name" value="NAP-like"/>
    <property type="match status" value="1"/>
</dbReference>